<name>ITBX_DROME</name>
<sequence length="846" mass="92656">MILERNRRCQLALLMIAILAAIAGQTDAQKAAKLTAVSTCASKEKCHTCIQTEGCAWCMQPDFKGQSRCYQNTSSLCPEEFAYSPITVEQILVNNKLTNQYKAELAAGGGGSAMSGSSSSSYSSSSSSSSFYSQSSSGSSSASGYEEYSAGEIVQIQPQSMRLALRVNEKHNIKISYSQAEGYPVDLYYLMDLSKSMEDDKAKLSTLGDKLSETMKRITNNFHLGFGSFVDKVLMPYVSTIPKKLEHPCENCKAPYGYQNHMPLNNNTESFSNEVKNATVSGNLDAPEGGFDAIMQAIACRSQIGWREQARRLLVFSTDAGFHYAGDGKLGGVIAPNDGECHLSPKGEYTHSTLQDYPSISQINQKVKDNAINIIFAVTASQLSVYEKLVEHIQGSSAAKLDNDSSNVVELVKEEYRKISSSVEMKDNATGDVKITYFSSCLSNGPEVQTSKCDNLKEGQQVSFTAQIQLLKCPEDPRDWTQTIHISPVGINEVMQIQLTMLCSCPCENPGSIGYQVQANSCSGHGTSMCGICNCDDSYFGNKCECSATDLTSKFANDTSCRADSTSTTDCSGRGHCVCGACECHKRPNPIEIISGKHCECDNFSCERNRNQLCSGPDHGTCECGRCKCKPGWTGSNCGCQESNDTCMPPGGGEICSGHGTCECGVCKCTVNDQGRFSGRHCEKCPTCSGRCQELKDCVQCQMYKTGELKNGDDCARNCTQFVPVGVEKVEIDETKDEQMCKFFDEDDCKFMFKYSEQGELHVYAQENKECPAKVFMLGIVMGVIAAIVLVGLAILLLWKLLTTIHDRREFARFEKERMNAKWDTGENPIYKQATSTFKNPMYAGK</sequence>
<dbReference type="EMBL" id="J03251">
    <property type="protein sequence ID" value="AAA28714.1"/>
    <property type="molecule type" value="mRNA"/>
</dbReference>
<dbReference type="EMBL" id="AE014298">
    <property type="protein sequence ID" value="AAF46313.2"/>
    <property type="molecule type" value="Genomic_DNA"/>
</dbReference>
<dbReference type="EMBL" id="AY113499">
    <property type="protein sequence ID" value="AAM29504.1"/>
    <property type="molecule type" value="mRNA"/>
</dbReference>
<dbReference type="PIR" id="A30889">
    <property type="entry name" value="A30889"/>
</dbReference>
<dbReference type="RefSeq" id="NP_001284998.1">
    <property type="nucleotide sequence ID" value="NM_001298069.1"/>
</dbReference>
<dbReference type="RefSeq" id="NP_001284999.1">
    <property type="nucleotide sequence ID" value="NM_001298070.1"/>
</dbReference>
<dbReference type="RefSeq" id="NP_524793.2">
    <property type="nucleotide sequence ID" value="NM_080054.3"/>
</dbReference>
<dbReference type="SMR" id="P11584"/>
<dbReference type="BioGRID" id="69357">
    <property type="interactions" value="51"/>
</dbReference>
<dbReference type="FunCoup" id="P11584">
    <property type="interactions" value="356"/>
</dbReference>
<dbReference type="IntAct" id="P11584">
    <property type="interactions" value="4"/>
</dbReference>
<dbReference type="STRING" id="7227.FBpp0309123"/>
<dbReference type="GlyCosmos" id="P11584">
    <property type="glycosylation" value="9 sites, No reported glycans"/>
</dbReference>
<dbReference type="GlyGen" id="P11584">
    <property type="glycosylation" value="10 sites, 1 O-linked glycan (1 site)"/>
</dbReference>
<dbReference type="iPTMnet" id="P11584"/>
<dbReference type="PaxDb" id="7227-FBpp0071061"/>
<dbReference type="DNASU" id="44885"/>
<dbReference type="EnsemblMetazoa" id="FBtr0071105">
    <property type="protein sequence ID" value="FBpp0071061"/>
    <property type="gene ID" value="FBgn0004657"/>
</dbReference>
<dbReference type="EnsemblMetazoa" id="FBtr0340136">
    <property type="protein sequence ID" value="FBpp0309122"/>
    <property type="gene ID" value="FBgn0004657"/>
</dbReference>
<dbReference type="EnsemblMetazoa" id="FBtr0340137">
    <property type="protein sequence ID" value="FBpp0309123"/>
    <property type="gene ID" value="FBgn0004657"/>
</dbReference>
<dbReference type="GeneID" id="44885"/>
<dbReference type="KEGG" id="dme:Dmel_CG1560"/>
<dbReference type="AGR" id="FB:FBgn0004657"/>
<dbReference type="CTD" id="44885"/>
<dbReference type="FlyBase" id="FBgn0004657">
    <property type="gene designation" value="mys"/>
</dbReference>
<dbReference type="VEuPathDB" id="VectorBase:FBgn0004657"/>
<dbReference type="eggNOG" id="KOG1226">
    <property type="taxonomic scope" value="Eukaryota"/>
</dbReference>
<dbReference type="HOGENOM" id="CLU_011772_1_1_1"/>
<dbReference type="InParanoid" id="P11584"/>
<dbReference type="OMA" id="NCVCGAC"/>
<dbReference type="OrthoDB" id="410592at2759"/>
<dbReference type="PhylomeDB" id="P11584"/>
<dbReference type="Reactome" id="R-DME-114608">
    <property type="pathway name" value="Platelet degranulation"/>
</dbReference>
<dbReference type="Reactome" id="R-DME-1236973">
    <property type="pathway name" value="Cross-presentation of particulate exogenous antigens (phagosomes)"/>
</dbReference>
<dbReference type="Reactome" id="R-DME-198933">
    <property type="pathway name" value="Immunoregulatory interactions between a Lymphoid and a non-Lymphoid cell"/>
</dbReference>
<dbReference type="Reactome" id="R-DME-202733">
    <property type="pathway name" value="Cell surface interactions at the vascular wall"/>
</dbReference>
<dbReference type="Reactome" id="R-DME-210991">
    <property type="pathway name" value="Basigin interactions"/>
</dbReference>
<dbReference type="Reactome" id="R-DME-2129379">
    <property type="pathway name" value="Molecules associated with elastic fibres"/>
</dbReference>
<dbReference type="Reactome" id="R-DME-216083">
    <property type="pathway name" value="Integrin cell surface interactions"/>
</dbReference>
<dbReference type="Reactome" id="R-DME-2173789">
    <property type="pathway name" value="TGF-beta receptor signaling activates SMADs"/>
</dbReference>
<dbReference type="Reactome" id="R-DME-3000170">
    <property type="pathway name" value="Syndecan interactions"/>
</dbReference>
<dbReference type="Reactome" id="R-DME-3000178">
    <property type="pathway name" value="ECM proteoglycans"/>
</dbReference>
<dbReference type="Reactome" id="R-DME-354192">
    <property type="pathway name" value="Integrin signaling"/>
</dbReference>
<dbReference type="Reactome" id="R-DME-445355">
    <property type="pathway name" value="Smooth Muscle Contraction"/>
</dbReference>
<dbReference type="Reactome" id="R-DME-446343">
    <property type="pathway name" value="Localization of the PINCH-ILK-PARVIN complex to focal adhesions"/>
</dbReference>
<dbReference type="Reactome" id="R-DME-5674135">
    <property type="pathway name" value="MAP2K and MAPK activation"/>
</dbReference>
<dbReference type="Reactome" id="R-DME-6798695">
    <property type="pathway name" value="Neutrophil degranulation"/>
</dbReference>
<dbReference type="Reactome" id="R-DME-9013149">
    <property type="pathway name" value="RAC1 GTPase cycle"/>
</dbReference>
<dbReference type="Reactome" id="R-DME-9013404">
    <property type="pathway name" value="RAC2 GTPase cycle"/>
</dbReference>
<dbReference type="Reactome" id="R-DME-9013408">
    <property type="pathway name" value="RHOG GTPase cycle"/>
</dbReference>
<dbReference type="Reactome" id="R-DME-9013423">
    <property type="pathway name" value="RAC3 GTPase cycle"/>
</dbReference>
<dbReference type="Reactome" id="R-DME-9860927">
    <property type="pathway name" value="Turbulent (oscillatory, disturbed) flow shear stress activates signaling by PIEZO1 and integrins in endothelial cells"/>
</dbReference>
<dbReference type="SignaLink" id="P11584"/>
<dbReference type="BioGRID-ORCS" id="44885">
    <property type="hits" value="0 hits in 3 CRISPR screens"/>
</dbReference>
<dbReference type="ChiTaRS" id="mys">
    <property type="organism name" value="fly"/>
</dbReference>
<dbReference type="GenomeRNAi" id="44885"/>
<dbReference type="PRO" id="PR:P11584"/>
<dbReference type="Proteomes" id="UP000000803">
    <property type="component" value="Chromosome X"/>
</dbReference>
<dbReference type="Bgee" id="FBgn0004657">
    <property type="expression patterns" value="Expressed in indirect flight muscle cell (Drosophila) in body wall and 246 other cell types or tissues"/>
</dbReference>
<dbReference type="ExpressionAtlas" id="P11584">
    <property type="expression patterns" value="baseline and differential"/>
</dbReference>
<dbReference type="GO" id="GO:0016324">
    <property type="term" value="C:apical plasma membrane"/>
    <property type="evidence" value="ECO:0007669"/>
    <property type="project" value="UniProtKB-SubCell"/>
</dbReference>
<dbReference type="GO" id="GO:0009925">
    <property type="term" value="C:basal plasma membrane"/>
    <property type="evidence" value="ECO:0000314"/>
    <property type="project" value="UniProtKB"/>
</dbReference>
<dbReference type="GO" id="GO:0031252">
    <property type="term" value="C:cell leading edge"/>
    <property type="evidence" value="ECO:0000314"/>
    <property type="project" value="FlyBase"/>
</dbReference>
<dbReference type="GO" id="GO:0009986">
    <property type="term" value="C:cell surface"/>
    <property type="evidence" value="ECO:0000318"/>
    <property type="project" value="GO_Central"/>
</dbReference>
<dbReference type="GO" id="GO:0043034">
    <property type="term" value="C:costamere"/>
    <property type="evidence" value="ECO:0000314"/>
    <property type="project" value="FlyBase"/>
</dbReference>
<dbReference type="GO" id="GO:0030425">
    <property type="term" value="C:dendrite"/>
    <property type="evidence" value="ECO:0000314"/>
    <property type="project" value="FlyBase"/>
</dbReference>
<dbReference type="GO" id="GO:0005925">
    <property type="term" value="C:focal adhesion"/>
    <property type="evidence" value="ECO:0000314"/>
    <property type="project" value="FlyBase"/>
</dbReference>
<dbReference type="GO" id="GO:0008305">
    <property type="term" value="C:integrin complex"/>
    <property type="evidence" value="ECO:0000314"/>
    <property type="project" value="FlyBase"/>
</dbReference>
<dbReference type="GO" id="GO:0016328">
    <property type="term" value="C:lateral plasma membrane"/>
    <property type="evidence" value="ECO:0000314"/>
    <property type="project" value="UniProtKB"/>
</dbReference>
<dbReference type="GO" id="GO:0005927">
    <property type="term" value="C:muscle tendon junction"/>
    <property type="evidence" value="ECO:0000314"/>
    <property type="project" value="FlyBase"/>
</dbReference>
<dbReference type="GO" id="GO:0005886">
    <property type="term" value="C:plasma membrane"/>
    <property type="evidence" value="ECO:0000314"/>
    <property type="project" value="UniProtKB"/>
</dbReference>
<dbReference type="GO" id="GO:0045211">
    <property type="term" value="C:postsynaptic membrane"/>
    <property type="evidence" value="ECO:0000315"/>
    <property type="project" value="FlyBase"/>
</dbReference>
<dbReference type="GO" id="GO:0042734">
    <property type="term" value="C:presynaptic membrane"/>
    <property type="evidence" value="ECO:0000315"/>
    <property type="project" value="FlyBase"/>
</dbReference>
<dbReference type="GO" id="GO:0005178">
    <property type="term" value="F:integrin binding"/>
    <property type="evidence" value="ECO:0000318"/>
    <property type="project" value="GO_Central"/>
</dbReference>
<dbReference type="GO" id="GO:0046982">
    <property type="term" value="F:protein heterodimerization activity"/>
    <property type="evidence" value="ECO:0000353"/>
    <property type="project" value="FlyBase"/>
</dbReference>
<dbReference type="GO" id="GO:0007015">
    <property type="term" value="P:actin filament organization"/>
    <property type="evidence" value="ECO:0000315"/>
    <property type="project" value="FlyBase"/>
</dbReference>
<dbReference type="GO" id="GO:0007411">
    <property type="term" value="P:axon guidance"/>
    <property type="evidence" value="ECO:0000315"/>
    <property type="project" value="FlyBase"/>
</dbReference>
<dbReference type="GO" id="GO:0007298">
    <property type="term" value="P:border follicle cell migration"/>
    <property type="evidence" value="ECO:0000315"/>
    <property type="project" value="FlyBase"/>
</dbReference>
<dbReference type="GO" id="GO:0016339">
    <property type="term" value="P:calcium-dependent cell-cell adhesion via plasma membrane cell adhesion molecules"/>
    <property type="evidence" value="ECO:0000304"/>
    <property type="project" value="FlyBase"/>
</dbReference>
<dbReference type="GO" id="GO:0033627">
    <property type="term" value="P:cell adhesion mediated by integrin"/>
    <property type="evidence" value="ECO:0000314"/>
    <property type="project" value="FlyBase"/>
</dbReference>
<dbReference type="GO" id="GO:0016477">
    <property type="term" value="P:cell migration"/>
    <property type="evidence" value="ECO:0000318"/>
    <property type="project" value="GO_Central"/>
</dbReference>
<dbReference type="GO" id="GO:0098609">
    <property type="term" value="P:cell-cell adhesion"/>
    <property type="evidence" value="ECO:0000318"/>
    <property type="project" value="GO_Central"/>
</dbReference>
<dbReference type="GO" id="GO:0007160">
    <property type="term" value="P:cell-matrix adhesion"/>
    <property type="evidence" value="ECO:0000318"/>
    <property type="project" value="GO_Central"/>
</dbReference>
<dbReference type="GO" id="GO:0031589">
    <property type="term" value="P:cell-substrate adhesion"/>
    <property type="evidence" value="ECO:0000315"/>
    <property type="project" value="FlyBase"/>
</dbReference>
<dbReference type="GO" id="GO:0007417">
    <property type="term" value="P:central nervous system development"/>
    <property type="evidence" value="ECO:0000315"/>
    <property type="project" value="FlyBase"/>
</dbReference>
<dbReference type="GO" id="GO:0021551">
    <property type="term" value="P:central nervous system morphogenesis"/>
    <property type="evidence" value="ECO:0000315"/>
    <property type="project" value="FlyBase"/>
</dbReference>
<dbReference type="GO" id="GO:0008340">
    <property type="term" value="P:determination of adult lifespan"/>
    <property type="evidence" value="ECO:0000315"/>
    <property type="project" value="FlyBase"/>
</dbReference>
<dbReference type="GO" id="GO:0007391">
    <property type="term" value="P:dorsal closure"/>
    <property type="evidence" value="ECO:0000315"/>
    <property type="project" value="FlyBase"/>
</dbReference>
<dbReference type="GO" id="GO:0035001">
    <property type="term" value="P:dorsal trunk growth, open tracheal system"/>
    <property type="evidence" value="ECO:0000315"/>
    <property type="project" value="FlyBase"/>
</dbReference>
<dbReference type="GO" id="GO:0007629">
    <property type="term" value="P:flight behavior"/>
    <property type="evidence" value="ECO:0007669"/>
    <property type="project" value="UniProtKB-KW"/>
</dbReference>
<dbReference type="GO" id="GO:0007377">
    <property type="term" value="P:germ-band extension"/>
    <property type="evidence" value="ECO:0000315"/>
    <property type="project" value="FlyBase"/>
</dbReference>
<dbReference type="GO" id="GO:0030718">
    <property type="term" value="P:germ-line stem cell population maintenance"/>
    <property type="evidence" value="ECO:0000315"/>
    <property type="project" value="FlyBase"/>
</dbReference>
<dbReference type="GO" id="GO:0035099">
    <property type="term" value="P:hemocyte migration"/>
    <property type="evidence" value="ECO:0000316"/>
    <property type="project" value="FlyBase"/>
</dbReference>
<dbReference type="GO" id="GO:0007157">
    <property type="term" value="P:heterophilic cell-cell adhesion via plasma membrane cell adhesion molecules"/>
    <property type="evidence" value="ECO:0000304"/>
    <property type="project" value="FlyBase"/>
</dbReference>
<dbReference type="GO" id="GO:0048803">
    <property type="term" value="P:imaginal disc-derived male genitalia morphogenesis"/>
    <property type="evidence" value="ECO:0000315"/>
    <property type="project" value="FlyBase"/>
</dbReference>
<dbReference type="GO" id="GO:0007476">
    <property type="term" value="P:imaginal disc-derived wing morphogenesis"/>
    <property type="evidence" value="ECO:0000315"/>
    <property type="project" value="FlyBase"/>
</dbReference>
<dbReference type="GO" id="GO:0007229">
    <property type="term" value="P:integrin-mediated signaling pathway"/>
    <property type="evidence" value="ECO:0000315"/>
    <property type="project" value="FlyBase"/>
</dbReference>
<dbReference type="GO" id="GO:0007508">
    <property type="term" value="P:larval heart development"/>
    <property type="evidence" value="ECO:0000315"/>
    <property type="project" value="FlyBase"/>
</dbReference>
<dbReference type="GO" id="GO:0035160">
    <property type="term" value="P:maintenance of epithelial integrity, open tracheal system"/>
    <property type="evidence" value="ECO:0000315"/>
    <property type="project" value="FlyBase"/>
</dbReference>
<dbReference type="GO" id="GO:0007494">
    <property type="term" value="P:midgut development"/>
    <property type="evidence" value="ECO:0000304"/>
    <property type="project" value="FlyBase"/>
</dbReference>
<dbReference type="GO" id="GO:0016203">
    <property type="term" value="P:muscle attachment"/>
    <property type="evidence" value="ECO:0000315"/>
    <property type="project" value="FlyBase"/>
</dbReference>
<dbReference type="GO" id="GO:0007517">
    <property type="term" value="P:muscle organ development"/>
    <property type="evidence" value="ECO:0000315"/>
    <property type="project" value="FlyBase"/>
</dbReference>
<dbReference type="GO" id="GO:0030336">
    <property type="term" value="P:negative regulation of cell migration"/>
    <property type="evidence" value="ECO:0000315"/>
    <property type="project" value="UniProtKB"/>
</dbReference>
<dbReference type="GO" id="GO:0003344">
    <property type="term" value="P:pericardium morphogenesis"/>
    <property type="evidence" value="ECO:0000315"/>
    <property type="project" value="FlyBase"/>
</dbReference>
<dbReference type="GO" id="GO:0090129">
    <property type="term" value="P:positive regulation of synapse maturation"/>
    <property type="evidence" value="ECO:0000315"/>
    <property type="project" value="FlyBase"/>
</dbReference>
<dbReference type="GO" id="GO:0008360">
    <property type="term" value="P:regulation of cell shape"/>
    <property type="evidence" value="ECO:0000315"/>
    <property type="project" value="FlyBase"/>
</dbReference>
<dbReference type="GO" id="GO:0051492">
    <property type="term" value="P:regulation of stress fiber assembly"/>
    <property type="evidence" value="ECO:0000315"/>
    <property type="project" value="FlyBase"/>
</dbReference>
<dbReference type="GO" id="GO:0007431">
    <property type="term" value="P:salivary gland development"/>
    <property type="evidence" value="ECO:0000315"/>
    <property type="project" value="FlyBase"/>
</dbReference>
<dbReference type="GO" id="GO:0045214">
    <property type="term" value="P:sarcomere organization"/>
    <property type="evidence" value="ECO:0000315"/>
    <property type="project" value="FlyBase"/>
</dbReference>
<dbReference type="GO" id="GO:0007608">
    <property type="term" value="P:sensory perception of smell"/>
    <property type="evidence" value="ECO:0000315"/>
    <property type="project" value="FlyBase"/>
</dbReference>
<dbReference type="GO" id="GO:0034446">
    <property type="term" value="P:substrate adhesion-dependent cell spreading"/>
    <property type="evidence" value="ECO:0000314"/>
    <property type="project" value="FlyBase"/>
</dbReference>
<dbReference type="GO" id="GO:0006930">
    <property type="term" value="P:substrate-dependent cell migration, cell extension"/>
    <property type="evidence" value="ECO:0000316"/>
    <property type="project" value="FlyBase"/>
</dbReference>
<dbReference type="GO" id="GO:0007419">
    <property type="term" value="P:ventral cord development"/>
    <property type="evidence" value="ECO:0000315"/>
    <property type="project" value="FlyBase"/>
</dbReference>
<dbReference type="GO" id="GO:0007601">
    <property type="term" value="P:visual perception"/>
    <property type="evidence" value="ECO:0007669"/>
    <property type="project" value="UniProtKB-KW"/>
</dbReference>
<dbReference type="FunFam" id="1.20.5.100:FF:000002">
    <property type="entry name" value="Integrin beta"/>
    <property type="match status" value="1"/>
</dbReference>
<dbReference type="FunFam" id="2.10.25.10:FF:000098">
    <property type="entry name" value="Integrin beta"/>
    <property type="match status" value="1"/>
</dbReference>
<dbReference type="FunFam" id="2.10.25.10:FF:000155">
    <property type="entry name" value="Integrin beta"/>
    <property type="match status" value="1"/>
</dbReference>
<dbReference type="FunFam" id="2.10.25.10:FF:000696">
    <property type="entry name" value="Integrin beta"/>
    <property type="match status" value="1"/>
</dbReference>
<dbReference type="FunFam" id="3.40.50.410:FF:000002">
    <property type="entry name" value="Integrin beta"/>
    <property type="match status" value="1"/>
</dbReference>
<dbReference type="FunFam" id="4.10.1240.30:FF:000005">
    <property type="entry name" value="Integrin beta"/>
    <property type="match status" value="1"/>
</dbReference>
<dbReference type="Gene3D" id="4.10.1240.30">
    <property type="match status" value="1"/>
</dbReference>
<dbReference type="Gene3D" id="1.20.5.100">
    <property type="entry name" value="Cytochrome c1, transmembrane anchor, C-terminal"/>
    <property type="match status" value="1"/>
</dbReference>
<dbReference type="Gene3D" id="2.10.25.10">
    <property type="entry name" value="Laminin"/>
    <property type="match status" value="4"/>
</dbReference>
<dbReference type="Gene3D" id="2.60.40.1510">
    <property type="entry name" value="ntegrin, alpha v. Chain A, domain 3"/>
    <property type="match status" value="1"/>
</dbReference>
<dbReference type="Gene3D" id="3.40.50.410">
    <property type="entry name" value="von Willebrand factor, type A domain"/>
    <property type="match status" value="1"/>
</dbReference>
<dbReference type="InterPro" id="IPR013111">
    <property type="entry name" value="EGF_extracell"/>
</dbReference>
<dbReference type="InterPro" id="IPR015812">
    <property type="entry name" value="Integrin_bsu"/>
</dbReference>
<dbReference type="InterPro" id="IPR014836">
    <property type="entry name" value="Integrin_bsu_cyt_dom"/>
</dbReference>
<dbReference type="InterPro" id="IPR012896">
    <property type="entry name" value="Integrin_bsu_tail"/>
</dbReference>
<dbReference type="InterPro" id="IPR036349">
    <property type="entry name" value="Integrin_bsu_tail_dom_sf"/>
</dbReference>
<dbReference type="InterPro" id="IPR002369">
    <property type="entry name" value="Integrin_bsu_VWA"/>
</dbReference>
<dbReference type="InterPro" id="IPR032695">
    <property type="entry name" value="Integrin_dom_sf"/>
</dbReference>
<dbReference type="InterPro" id="IPR036465">
    <property type="entry name" value="vWFA_dom_sf"/>
</dbReference>
<dbReference type="PANTHER" id="PTHR10082">
    <property type="entry name" value="INTEGRIN BETA SUBUNIT"/>
    <property type="match status" value="1"/>
</dbReference>
<dbReference type="PANTHER" id="PTHR10082:SF60">
    <property type="entry name" value="INTEGRIN BETA-PS"/>
    <property type="match status" value="1"/>
</dbReference>
<dbReference type="Pfam" id="PF07974">
    <property type="entry name" value="EGF_2"/>
    <property type="match status" value="1"/>
</dbReference>
<dbReference type="Pfam" id="PF23105">
    <property type="entry name" value="EGF_integrin"/>
    <property type="match status" value="2"/>
</dbReference>
<dbReference type="Pfam" id="PF08725">
    <property type="entry name" value="Integrin_b_cyt"/>
    <property type="match status" value="1"/>
</dbReference>
<dbReference type="Pfam" id="PF07965">
    <property type="entry name" value="Integrin_B_tail"/>
    <property type="match status" value="1"/>
</dbReference>
<dbReference type="Pfam" id="PF00362">
    <property type="entry name" value="Integrin_beta"/>
    <property type="match status" value="1"/>
</dbReference>
<dbReference type="PIRSF" id="PIRSF002512">
    <property type="entry name" value="Integrin_B"/>
    <property type="match status" value="1"/>
</dbReference>
<dbReference type="PRINTS" id="PR01186">
    <property type="entry name" value="INTEGRINB"/>
</dbReference>
<dbReference type="SMART" id="SM00187">
    <property type="entry name" value="INB"/>
    <property type="match status" value="1"/>
</dbReference>
<dbReference type="SMART" id="SM01241">
    <property type="entry name" value="Integrin_b_cyt"/>
    <property type="match status" value="1"/>
</dbReference>
<dbReference type="SMART" id="SM01242">
    <property type="entry name" value="Integrin_B_tail"/>
    <property type="match status" value="1"/>
</dbReference>
<dbReference type="SUPFAM" id="SSF57196">
    <property type="entry name" value="EGF/Laminin"/>
    <property type="match status" value="1"/>
</dbReference>
<dbReference type="SUPFAM" id="SSF69687">
    <property type="entry name" value="Integrin beta tail domain"/>
    <property type="match status" value="1"/>
</dbReference>
<dbReference type="SUPFAM" id="SSF69179">
    <property type="entry name" value="Integrin domains"/>
    <property type="match status" value="1"/>
</dbReference>
<dbReference type="SUPFAM" id="SSF103575">
    <property type="entry name" value="Plexin repeat"/>
    <property type="match status" value="1"/>
</dbReference>
<dbReference type="SUPFAM" id="SSF53300">
    <property type="entry name" value="vWA-like"/>
    <property type="match status" value="1"/>
</dbReference>
<dbReference type="PROSITE" id="PS00022">
    <property type="entry name" value="EGF_1"/>
    <property type="match status" value="2"/>
</dbReference>
<dbReference type="PROSITE" id="PS01186">
    <property type="entry name" value="EGF_2"/>
    <property type="match status" value="1"/>
</dbReference>
<dbReference type="PROSITE" id="PS00243">
    <property type="entry name" value="I_EGF_1"/>
    <property type="match status" value="3"/>
</dbReference>
<dbReference type="PROSITE" id="PS52047">
    <property type="entry name" value="I_EGF_2"/>
    <property type="match status" value="4"/>
</dbReference>
<protein>
    <recommendedName>
        <fullName>Integrin beta-PS</fullName>
    </recommendedName>
    <alternativeName>
        <fullName>Position-specific antigen beta subunit</fullName>
    </alternativeName>
    <alternativeName>
        <fullName>Protein myospheroid</fullName>
    </alternativeName>
    <alternativeName>
        <fullName>Protein olfactory C</fullName>
    </alternativeName>
</protein>
<reference key="1">
    <citation type="journal article" date="1988" name="Proc. Natl. Acad. Sci. U.S.A.">
        <title>The lethal myospheroid gene of Drosophila encodes a membrane protein homologous to vertebrate integrin beta subunits.</title>
        <authorList>
            <person name="Mackrell A.J."/>
            <person name="Blumberg B."/>
            <person name="Haynes S.R."/>
            <person name="Fessler J.H."/>
        </authorList>
    </citation>
    <scope>NUCLEOTIDE SEQUENCE [MRNA]</scope>
</reference>
<reference key="2">
    <citation type="journal article" date="1994" name="Development">
        <title>Functions of the cytoplasmic domain of the beta PS integrin subunit during Drosophila development.</title>
        <authorList>
            <person name="Grinblat Y."/>
            <person name="Zusman S."/>
            <person name="Yee G."/>
            <person name="Hynes R.O."/>
            <person name="Kafatos F.C."/>
        </authorList>
    </citation>
    <scope>NUCLEOTIDE SEQUENCE [MRNA]</scope>
    <scope>FUNCTION</scope>
    <scope>TISSUE SPECIFICITY</scope>
    <scope>MUTAGENESIS OF ASP-807; PHE-811; PHE-814; GLU-817; TYR-831 AND TYR-843</scope>
    <source>
        <tissue>Embryo</tissue>
        <tissue>Imaginal disk</tissue>
    </source>
</reference>
<reference key="3">
    <citation type="journal article" date="2000" name="Science">
        <title>The genome sequence of Drosophila melanogaster.</title>
        <authorList>
            <person name="Adams M.D."/>
            <person name="Celniker S.E."/>
            <person name="Holt R.A."/>
            <person name="Evans C.A."/>
            <person name="Gocayne J.D."/>
            <person name="Amanatides P.G."/>
            <person name="Scherer S.E."/>
            <person name="Li P.W."/>
            <person name="Hoskins R.A."/>
            <person name="Galle R.F."/>
            <person name="George R.A."/>
            <person name="Lewis S.E."/>
            <person name="Richards S."/>
            <person name="Ashburner M."/>
            <person name="Henderson S.N."/>
            <person name="Sutton G.G."/>
            <person name="Wortman J.R."/>
            <person name="Yandell M.D."/>
            <person name="Zhang Q."/>
            <person name="Chen L.X."/>
            <person name="Brandon R.C."/>
            <person name="Rogers Y.-H.C."/>
            <person name="Blazej R.G."/>
            <person name="Champe M."/>
            <person name="Pfeiffer B.D."/>
            <person name="Wan K.H."/>
            <person name="Doyle C."/>
            <person name="Baxter E.G."/>
            <person name="Helt G."/>
            <person name="Nelson C.R."/>
            <person name="Miklos G.L.G."/>
            <person name="Abril J.F."/>
            <person name="Agbayani A."/>
            <person name="An H.-J."/>
            <person name="Andrews-Pfannkoch C."/>
            <person name="Baldwin D."/>
            <person name="Ballew R.M."/>
            <person name="Basu A."/>
            <person name="Baxendale J."/>
            <person name="Bayraktaroglu L."/>
            <person name="Beasley E.M."/>
            <person name="Beeson K.Y."/>
            <person name="Benos P.V."/>
            <person name="Berman B.P."/>
            <person name="Bhandari D."/>
            <person name="Bolshakov S."/>
            <person name="Borkova D."/>
            <person name="Botchan M.R."/>
            <person name="Bouck J."/>
            <person name="Brokstein P."/>
            <person name="Brottier P."/>
            <person name="Burtis K.C."/>
            <person name="Busam D.A."/>
            <person name="Butler H."/>
            <person name="Cadieu E."/>
            <person name="Center A."/>
            <person name="Chandra I."/>
            <person name="Cherry J.M."/>
            <person name="Cawley S."/>
            <person name="Dahlke C."/>
            <person name="Davenport L.B."/>
            <person name="Davies P."/>
            <person name="de Pablos B."/>
            <person name="Delcher A."/>
            <person name="Deng Z."/>
            <person name="Mays A.D."/>
            <person name="Dew I."/>
            <person name="Dietz S.M."/>
            <person name="Dodson K."/>
            <person name="Doup L.E."/>
            <person name="Downes M."/>
            <person name="Dugan-Rocha S."/>
            <person name="Dunkov B.C."/>
            <person name="Dunn P."/>
            <person name="Durbin K.J."/>
            <person name="Evangelista C.C."/>
            <person name="Ferraz C."/>
            <person name="Ferriera S."/>
            <person name="Fleischmann W."/>
            <person name="Fosler C."/>
            <person name="Gabrielian A.E."/>
            <person name="Garg N.S."/>
            <person name="Gelbart W.M."/>
            <person name="Glasser K."/>
            <person name="Glodek A."/>
            <person name="Gong F."/>
            <person name="Gorrell J.H."/>
            <person name="Gu Z."/>
            <person name="Guan P."/>
            <person name="Harris M."/>
            <person name="Harris N.L."/>
            <person name="Harvey D.A."/>
            <person name="Heiman T.J."/>
            <person name="Hernandez J.R."/>
            <person name="Houck J."/>
            <person name="Hostin D."/>
            <person name="Houston K.A."/>
            <person name="Howland T.J."/>
            <person name="Wei M.-H."/>
            <person name="Ibegwam C."/>
            <person name="Jalali M."/>
            <person name="Kalush F."/>
            <person name="Karpen G.H."/>
            <person name="Ke Z."/>
            <person name="Kennison J.A."/>
            <person name="Ketchum K.A."/>
            <person name="Kimmel B.E."/>
            <person name="Kodira C.D."/>
            <person name="Kraft C.L."/>
            <person name="Kravitz S."/>
            <person name="Kulp D."/>
            <person name="Lai Z."/>
            <person name="Lasko P."/>
            <person name="Lei Y."/>
            <person name="Levitsky A.A."/>
            <person name="Li J.H."/>
            <person name="Li Z."/>
            <person name="Liang Y."/>
            <person name="Lin X."/>
            <person name="Liu X."/>
            <person name="Mattei B."/>
            <person name="McIntosh T.C."/>
            <person name="McLeod M.P."/>
            <person name="McPherson D."/>
            <person name="Merkulov G."/>
            <person name="Milshina N.V."/>
            <person name="Mobarry C."/>
            <person name="Morris J."/>
            <person name="Moshrefi A."/>
            <person name="Mount S.M."/>
            <person name="Moy M."/>
            <person name="Murphy B."/>
            <person name="Murphy L."/>
            <person name="Muzny D.M."/>
            <person name="Nelson D.L."/>
            <person name="Nelson D.R."/>
            <person name="Nelson K.A."/>
            <person name="Nixon K."/>
            <person name="Nusskern D.R."/>
            <person name="Pacleb J.M."/>
            <person name="Palazzolo M."/>
            <person name="Pittman G.S."/>
            <person name="Pan S."/>
            <person name="Pollard J."/>
            <person name="Puri V."/>
            <person name="Reese M.G."/>
            <person name="Reinert K."/>
            <person name="Remington K."/>
            <person name="Saunders R.D.C."/>
            <person name="Scheeler F."/>
            <person name="Shen H."/>
            <person name="Shue B.C."/>
            <person name="Siden-Kiamos I."/>
            <person name="Simpson M."/>
            <person name="Skupski M.P."/>
            <person name="Smith T.J."/>
            <person name="Spier E."/>
            <person name="Spradling A.C."/>
            <person name="Stapleton M."/>
            <person name="Strong R."/>
            <person name="Sun E."/>
            <person name="Svirskas R."/>
            <person name="Tector C."/>
            <person name="Turner R."/>
            <person name="Venter E."/>
            <person name="Wang A.H."/>
            <person name="Wang X."/>
            <person name="Wang Z.-Y."/>
            <person name="Wassarman D.A."/>
            <person name="Weinstock G.M."/>
            <person name="Weissenbach J."/>
            <person name="Williams S.M."/>
            <person name="Woodage T."/>
            <person name="Worley K.C."/>
            <person name="Wu D."/>
            <person name="Yang S."/>
            <person name="Yao Q.A."/>
            <person name="Ye J."/>
            <person name="Yeh R.-F."/>
            <person name="Zaveri J.S."/>
            <person name="Zhan M."/>
            <person name="Zhang G."/>
            <person name="Zhao Q."/>
            <person name="Zheng L."/>
            <person name="Zheng X.H."/>
            <person name="Zhong F.N."/>
            <person name="Zhong W."/>
            <person name="Zhou X."/>
            <person name="Zhu S.C."/>
            <person name="Zhu X."/>
            <person name="Smith H.O."/>
            <person name="Gibbs R.A."/>
            <person name="Myers E.W."/>
            <person name="Rubin G.M."/>
            <person name="Venter J.C."/>
        </authorList>
    </citation>
    <scope>NUCLEOTIDE SEQUENCE [LARGE SCALE GENOMIC DNA]</scope>
    <source>
        <strain>Berkeley</strain>
    </source>
</reference>
<reference key="4">
    <citation type="journal article" date="2002" name="Genome Biol.">
        <title>Annotation of the Drosophila melanogaster euchromatic genome: a systematic review.</title>
        <authorList>
            <person name="Misra S."/>
            <person name="Crosby M.A."/>
            <person name="Mungall C.J."/>
            <person name="Matthews B.B."/>
            <person name="Campbell K.S."/>
            <person name="Hradecky P."/>
            <person name="Huang Y."/>
            <person name="Kaminker J.S."/>
            <person name="Millburn G.H."/>
            <person name="Prochnik S.E."/>
            <person name="Smith C.D."/>
            <person name="Tupy J.L."/>
            <person name="Whitfield E.J."/>
            <person name="Bayraktaroglu L."/>
            <person name="Berman B.P."/>
            <person name="Bettencourt B.R."/>
            <person name="Celniker S.E."/>
            <person name="de Grey A.D.N.J."/>
            <person name="Drysdale R.A."/>
            <person name="Harris N.L."/>
            <person name="Richter J."/>
            <person name="Russo S."/>
            <person name="Schroeder A.J."/>
            <person name="Shu S.Q."/>
            <person name="Stapleton M."/>
            <person name="Yamada C."/>
            <person name="Ashburner M."/>
            <person name="Gelbart W.M."/>
            <person name="Rubin G.M."/>
            <person name="Lewis S.E."/>
        </authorList>
    </citation>
    <scope>GENOME REANNOTATION</scope>
    <source>
        <strain>Berkeley</strain>
    </source>
</reference>
<reference key="5">
    <citation type="journal article" date="2002" name="Genome Biol.">
        <title>A Drosophila full-length cDNA resource.</title>
        <authorList>
            <person name="Stapleton M."/>
            <person name="Carlson J.W."/>
            <person name="Brokstein P."/>
            <person name="Yu C."/>
            <person name="Champe M."/>
            <person name="George R.A."/>
            <person name="Guarin H."/>
            <person name="Kronmiller B."/>
            <person name="Pacleb J.M."/>
            <person name="Park S."/>
            <person name="Wan K.H."/>
            <person name="Rubin G.M."/>
            <person name="Celniker S.E."/>
        </authorList>
    </citation>
    <scope>NUCLEOTIDE SEQUENCE [LARGE SCALE MRNA]</scope>
    <source>
        <strain>Berkeley</strain>
        <tissue>Embryo</tissue>
    </source>
</reference>
<reference key="6">
    <citation type="journal article" date="1994" name="Development">
        <title>Tiggrin, a novel Drosophila extracellular matrix protein that functions as a ligand for Drosophila alpha PS2 beta PS integrins.</title>
        <authorList>
            <person name="Fogerty F.J."/>
            <person name="Fessler L.I."/>
            <person name="Bunch T.A."/>
            <person name="Yaron Y."/>
            <person name="Parker C.G."/>
            <person name="Nelson R.E."/>
            <person name="Brower D.L."/>
            <person name="Gullberg D."/>
            <person name="Fessler J.H."/>
        </authorList>
    </citation>
    <scope>FUNCTION</scope>
</reference>
<reference key="7">
    <citation type="journal article" date="1994" name="Proc. Natl. Acad. Sci. U.S.A.">
        <title>Drosophila PS1 integrin is a laminin receptor and differs in ligand specificity from PS2.</title>
        <authorList>
            <person name="Gotwals P.J."/>
            <person name="Fessler L.I."/>
            <person name="Wehrli M."/>
            <person name="Hynes R.O."/>
        </authorList>
    </citation>
    <scope>FUNCTION</scope>
</reference>
<reference key="8">
    <citation type="journal article" date="1998" name="J. Biol. Chem.">
        <title>Splice variants of the Drosophila PS2 integrins differentially interact with RGD-containing fragments of the extracellular proteins tiggrin, ten-m, and D-laminin 2.</title>
        <authorList>
            <person name="Graner M.W."/>
            <person name="Bunch T.A."/>
            <person name="Baumgartner S."/>
            <person name="Kerschen A."/>
            <person name="Brower D.L."/>
        </authorList>
    </citation>
    <scope>FUNCTION</scope>
</reference>
<reference key="9">
    <citation type="journal article" date="2000" name="Mol. Gen. Genet.">
        <title>Genetic analysis of olfC demonstrates a role for the position-specific integrins in the olfactory system of Drosophila melanogaster.</title>
        <authorList>
            <person name="Ayyub C."/>
            <person name="Rodrigues V."/>
            <person name="Hasan G."/>
            <person name="Siddiqi O."/>
        </authorList>
    </citation>
    <scope>FUNCTION</scope>
    <scope>DISRUPTION PHENOTYPE</scope>
</reference>
<reference key="10">
    <citation type="journal article" date="2004" name="Development">
        <title>Morphogenesis in the absence of integrins: mutation of both Drosophila beta subunits prevents midgut migration.</title>
        <authorList>
            <person name="Devenport D."/>
            <person name="Brown N.H."/>
        </authorList>
    </citation>
    <scope>FUNCTION</scope>
    <scope>DISRUPTION PHENOTYPE</scope>
</reference>
<reference key="11">
    <citation type="journal article" date="2007" name="Glycobiology">
        <title>Identification of N-glycosylated proteins from the central nervous system of Drosophila melanogaster.</title>
        <authorList>
            <person name="Koles K."/>
            <person name="Lim J.-M."/>
            <person name="Aoki K."/>
            <person name="Porterfield M."/>
            <person name="Tiemeyer M."/>
            <person name="Wells L."/>
            <person name="Panin V."/>
        </authorList>
    </citation>
    <scope>GLYCOSYLATION [LARGE SCALE ANALYSIS] AT ASN-403; ASN-557 AND ASN-718</scope>
    <scope>IDENTIFICATION BY MASS SPECTROMETRY</scope>
    <source>
        <strain>Oregon-R</strain>
        <tissue>Head</tissue>
    </source>
</reference>
<reference key="12">
    <citation type="journal article" date="2008" name="Dev. Dyn.">
        <title>Integrin alpha chains exhibit distinct temporal and spatial localization patterns in epithelial cells of the Drosophila ovary.</title>
        <authorList>
            <person name="Dinkins M.B."/>
            <person name="Fratto V.M."/>
            <person name="Lemosy E.K."/>
        </authorList>
    </citation>
    <scope>FUNCTION</scope>
    <scope>SUBCELLULAR LOCATION</scope>
    <scope>TISSUE SPECIFICITY</scope>
</reference>
<reference key="13">
    <citation type="journal article" date="2009" name="Nat. Biotechnol.">
        <title>Mass-spectrometric identification and relative quantification of N-linked cell surface glycoproteins.</title>
        <authorList>
            <person name="Wollscheid B."/>
            <person name="Bausch-Fluck D."/>
            <person name="Henderson C."/>
            <person name="O'Brien R."/>
            <person name="Bibel M."/>
            <person name="Schiess R."/>
            <person name="Aebersold R."/>
            <person name="Watts J.D."/>
        </authorList>
    </citation>
    <scope>GLYCOSYLATION [LARGE SCALE ANALYSIS] AT ASN-266; ASN-403; ASN-557 AND ASN-718</scope>
    <scope>IDENTIFICATION BY MASS SPECTROMETRY</scope>
</reference>
<reference key="14">
    <citation type="journal article" date="2016" name="PLoS Genet.">
        <title>Maintenance of stem cell niche integrity by a novel activator of integrin signaling.</title>
        <authorList>
            <person name="Lee J.Y."/>
            <person name="Chen J.Y."/>
            <person name="Shaw J.L."/>
            <person name="Chang K.T."/>
        </authorList>
    </citation>
    <scope>FUNCTION</scope>
    <scope>TISSUE SPECIFICITY</scope>
</reference>
<reference key="15">
    <citation type="journal article" date="2023" name="Front. Cell Dev. Biol.">
        <title>Specific prostaglandins are produced in the migratory cells and the surrounding substrate to promote Drosophila border cell migration.</title>
        <authorList>
            <person name="Mellentine S.Q."/>
            <person name="Brown H.N."/>
            <person name="Ramsey A.S."/>
            <person name="Li J."/>
            <person name="Tootle T.L."/>
        </authorList>
    </citation>
    <scope>SUBCELLULAR LOCATION</scope>
    <scope>DEVELOPMENTAL STAGE</scope>
</reference>
<gene>
    <name type="primary">mys</name>
    <name type="synonym">l(1)mys</name>
    <name type="synonym">olfC</name>
    <name type="ORF">CG1560</name>
</gene>
<organism>
    <name type="scientific">Drosophila melanogaster</name>
    <name type="common">Fruit fly</name>
    <dbReference type="NCBI Taxonomy" id="7227"/>
    <lineage>
        <taxon>Eukaryota</taxon>
        <taxon>Metazoa</taxon>
        <taxon>Ecdysozoa</taxon>
        <taxon>Arthropoda</taxon>
        <taxon>Hexapoda</taxon>
        <taxon>Insecta</taxon>
        <taxon>Pterygota</taxon>
        <taxon>Neoptera</taxon>
        <taxon>Endopterygota</taxon>
        <taxon>Diptera</taxon>
        <taxon>Brachycera</taxon>
        <taxon>Muscomorpha</taxon>
        <taxon>Ephydroidea</taxon>
        <taxon>Drosophilidae</taxon>
        <taxon>Drosophila</taxon>
        <taxon>Sophophora</taxon>
    </lineage>
</organism>
<proteinExistence type="evidence at protein level"/>
<evidence type="ECO:0000250" key="1"/>
<evidence type="ECO:0000255" key="2"/>
<evidence type="ECO:0000255" key="3">
    <source>
        <dbReference type="PROSITE-ProRule" id="PRU00219"/>
    </source>
</evidence>
<evidence type="ECO:0000255" key="4">
    <source>
        <dbReference type="PROSITE-ProRule" id="PRU01392"/>
    </source>
</evidence>
<evidence type="ECO:0000269" key="5">
    <source>
    </source>
</evidence>
<evidence type="ECO:0000269" key="6">
    <source>
    </source>
</evidence>
<evidence type="ECO:0000269" key="7">
    <source>
    </source>
</evidence>
<evidence type="ECO:0000269" key="8">
    <source>
    </source>
</evidence>
<evidence type="ECO:0000269" key="9">
    <source>
    </source>
</evidence>
<evidence type="ECO:0000269" key="10">
    <source>
    </source>
</evidence>
<evidence type="ECO:0000269" key="11">
    <source>
    </source>
</evidence>
<evidence type="ECO:0000269" key="12">
    <source>
    </source>
</evidence>
<evidence type="ECO:0000269" key="13">
    <source>
    </source>
</evidence>
<evidence type="ECO:0000269" key="14">
    <source>
    </source>
</evidence>
<evidence type="ECO:0000269" key="15">
    <source>
    </source>
</evidence>
<evidence type="ECO:0000305" key="16"/>
<accession>P11584</accession>
<accession>Q8MYX9</accession>
<accession>Q9W3L2</accession>
<feature type="signal peptide" evidence="2">
    <location>
        <begin position="1"/>
        <end position="28"/>
    </location>
</feature>
<feature type="chain" id="PRO_0000016356" description="Integrin beta-PS">
    <location>
        <begin position="29"/>
        <end position="846"/>
    </location>
</feature>
<feature type="topological domain" description="Extracellular" evidence="2">
    <location>
        <begin position="29"/>
        <end position="777"/>
    </location>
</feature>
<feature type="transmembrane region" description="Helical" evidence="2">
    <location>
        <begin position="778"/>
        <end position="798"/>
    </location>
</feature>
<feature type="topological domain" description="Cytoplasmic" evidence="2">
    <location>
        <begin position="799"/>
        <end position="846"/>
    </location>
</feature>
<feature type="domain" description="VWFA" evidence="3">
    <location>
        <begin position="186"/>
        <end position="419"/>
    </location>
</feature>
<feature type="domain" description="I-EGF 1" evidence="4">
    <location>
        <begin position="507"/>
        <end position="545"/>
    </location>
</feature>
<feature type="domain" description="I-EGF 2" evidence="4">
    <location>
        <begin position="546"/>
        <end position="600"/>
    </location>
</feature>
<feature type="domain" description="I-EGF 3" evidence="4">
    <location>
        <begin position="601"/>
        <end position="639"/>
    </location>
</feature>
<feature type="domain" description="I-EGF 4" evidence="4">
    <location>
        <begin position="640"/>
        <end position="683"/>
    </location>
</feature>
<feature type="modified residue" description="Phosphotyrosine" evidence="1">
    <location>
        <position position="831"/>
    </location>
</feature>
<feature type="modified residue" description="Phosphotyrosine" evidence="1">
    <location>
        <position position="843"/>
    </location>
</feature>
<feature type="glycosylation site" description="N-linked (GlcNAc...) asparagine" evidence="2">
    <location>
        <position position="72"/>
    </location>
</feature>
<feature type="glycosylation site" description="N-linked (GlcNAc...) asparagine" evidence="9">
    <location>
        <position position="266"/>
    </location>
</feature>
<feature type="glycosylation site" description="N-linked (GlcNAc...) asparagine" evidence="2">
    <location>
        <position position="277"/>
    </location>
</feature>
<feature type="glycosylation site" description="N-linked (GlcNAc...) asparagine" evidence="7 9">
    <location>
        <position position="403"/>
    </location>
</feature>
<feature type="glycosylation site" description="N-linked (GlcNAc...) asparagine" evidence="2">
    <location>
        <position position="428"/>
    </location>
</feature>
<feature type="glycosylation site" description="N-linked (GlcNAc...) asparagine" evidence="7 9">
    <location>
        <position position="557"/>
    </location>
</feature>
<feature type="glycosylation site" description="N-linked (GlcNAc...) asparagine" evidence="2">
    <location>
        <position position="603"/>
    </location>
</feature>
<feature type="glycosylation site" description="N-linked (GlcNAc...) asparagine" evidence="2">
    <location>
        <position position="644"/>
    </location>
</feature>
<feature type="glycosylation site" description="N-linked (GlcNAc...) asparagine" evidence="7 9">
    <location>
        <position position="718"/>
    </location>
</feature>
<feature type="disulfide bond" evidence="1">
    <location>
        <begin position="46"/>
        <end position="55"/>
    </location>
</feature>
<feature type="disulfide bond" evidence="1">
    <location>
        <begin position="249"/>
        <end position="252"/>
    </location>
</feature>
<feature type="disulfide bond" evidence="1">
    <location>
        <begin position="300"/>
        <end position="341"/>
    </location>
</feature>
<feature type="disulfide bond" evidence="1">
    <location>
        <begin position="441"/>
        <end position="453"/>
    </location>
</feature>
<feature type="disulfide bond" evidence="1">
    <location>
        <begin position="473"/>
        <end position="741"/>
    </location>
</feature>
<feature type="disulfide bond" evidence="4">
    <location>
        <begin position="507"/>
        <end position="530"/>
    </location>
</feature>
<feature type="disulfide bond" evidence="4">
    <location>
        <begin position="522"/>
        <end position="533"/>
    </location>
</feature>
<feature type="disulfide bond" evidence="4">
    <location>
        <begin position="535"/>
        <end position="544"/>
    </location>
</feature>
<feature type="disulfide bond" evidence="4">
    <location>
        <begin position="546"/>
        <end position="579"/>
    </location>
</feature>
<feature type="disulfide bond" evidence="4">
    <location>
        <begin position="561"/>
        <end position="577"/>
    </location>
</feature>
<feature type="disulfide bond" evidence="4">
    <location>
        <begin position="571"/>
        <end position="582"/>
    </location>
</feature>
<feature type="disulfide bond" evidence="4">
    <location>
        <begin position="584"/>
        <end position="599"/>
    </location>
</feature>
<feature type="disulfide bond" evidence="4">
    <location>
        <begin position="601"/>
        <end position="624"/>
    </location>
</feature>
<feature type="disulfide bond" evidence="4">
    <location>
        <begin position="606"/>
        <end position="622"/>
    </location>
</feature>
<feature type="disulfide bond" evidence="4">
    <location>
        <begin position="614"/>
        <end position="627"/>
    </location>
</feature>
<feature type="disulfide bond" evidence="4">
    <location>
        <begin position="629"/>
        <end position="638"/>
    </location>
</feature>
<feature type="disulfide bond" evidence="4">
    <location>
        <begin position="640"/>
        <end position="664"/>
    </location>
</feature>
<feature type="disulfide bond" evidence="4">
    <location>
        <begin position="647"/>
        <end position="662"/>
    </location>
</feature>
<feature type="disulfide bond" evidence="4">
    <location>
        <begin position="656"/>
        <end position="667"/>
    </location>
</feature>
<feature type="disulfide bond" evidence="4">
    <location>
        <begin position="669"/>
        <end position="682"/>
    </location>
</feature>
<feature type="disulfide bond" evidence="1">
    <location>
        <begin position="685"/>
        <end position="688"/>
    </location>
</feature>
<feature type="disulfide bond" evidence="1">
    <location>
        <begin position="692"/>
        <end position="701"/>
    </location>
</feature>
<feature type="disulfide bond" evidence="1">
    <location>
        <begin position="698"/>
        <end position="771"/>
    </location>
</feature>
<feature type="disulfide bond" evidence="1">
    <location>
        <begin position="719"/>
        <end position="749"/>
    </location>
</feature>
<feature type="mutagenesis site" description="Rescues dorsal closure defect, muscle attachment defect, disorganized ommatidial array and loss of cell layer attachment in mutants; when associated with A-817." evidence="14">
    <original>D</original>
    <variation>A</variation>
    <location>
        <position position="807"/>
    </location>
</feature>
<feature type="mutagenesis site" description="Rescues muscle attachment defect and loss of cell layer attachment in mutants; when associated with A-814." evidence="14">
    <original>F</original>
    <variation>A</variation>
    <location>
        <position position="811"/>
    </location>
</feature>
<feature type="mutagenesis site" description="Rescues muscle attachment defect and loss of cell layer attachment in mutants; when associated with A-811." evidence="14">
    <original>F</original>
    <variation>A</variation>
    <location>
        <position position="814"/>
    </location>
</feature>
<feature type="mutagenesis site" description="Rescues dorsal closure defect, muscle attachment defects, disorganized ommatidial array and loss of cell layer attachment in mutants; when associated with A-807." evidence="14">
    <original>E</original>
    <variation>A</variation>
    <location>
        <position position="817"/>
    </location>
</feature>
<feature type="mutagenesis site" description="No effect on lethality; when associated with A-843." evidence="14">
    <original>Y</original>
    <variation>A</variation>
    <location>
        <position position="831"/>
    </location>
</feature>
<feature type="mutagenesis site" description="No effect on lethality; when associated with A-831." evidence="14">
    <original>Y</original>
    <variation>A</variation>
    <location>
        <position position="843"/>
    </location>
</feature>
<feature type="sequence conflict" description="In Ref. 1; AAA28714." evidence="16" ref="1">
    <original>I</original>
    <variation>M</variation>
    <location>
        <position position="18"/>
    </location>
</feature>
<feature type="sequence conflict" description="In Ref. 1; AAA28714." evidence="16" ref="1">
    <original>G</original>
    <variation>A</variation>
    <location>
        <position position="24"/>
    </location>
</feature>
<feature type="sequence conflict" description="In Ref. 1; AAA28714." evidence="16" ref="1">
    <original>D</original>
    <variation>N</variation>
    <location>
        <position position="27"/>
    </location>
</feature>
<keyword id="KW-0085">Behavior</keyword>
<keyword id="KW-0130">Cell adhesion</keyword>
<keyword id="KW-1003">Cell membrane</keyword>
<keyword id="KW-0217">Developmental protein</keyword>
<keyword id="KW-1015">Disulfide bond</keyword>
<keyword id="KW-0286">Flight</keyword>
<keyword id="KW-0325">Glycoprotein</keyword>
<keyword id="KW-0401">Integrin</keyword>
<keyword id="KW-0472">Membrane</keyword>
<keyword id="KW-0552">Olfaction</keyword>
<keyword id="KW-0597">Phosphoprotein</keyword>
<keyword id="KW-0675">Receptor</keyword>
<keyword id="KW-1185">Reference proteome</keyword>
<keyword id="KW-0677">Repeat</keyword>
<keyword id="KW-0716">Sensory transduction</keyword>
<keyword id="KW-0732">Signal</keyword>
<keyword id="KW-0812">Transmembrane</keyword>
<keyword id="KW-1133">Transmembrane helix</keyword>
<keyword id="KW-0844">Vision</keyword>
<comment type="function">
    <text evidence="5 6 8 10 12 13 14 15">Integrin alpha-PS1/beta-PS is a receptor for laminin (PubMed:7972082). Integrin alpha-PS2/beta-PS is a receptor for Tig, wb and Ten-m (PubMed:7924982, PubMed:7972082, PubMed:9660786). Contributes to endodermal integrity and adhesion between the midgut epithelium and the surrounding visceral muscle (PubMed:15469969). Essential for migration of the primordial midgut cells and for maintaining, but not establishing, cell polarity in the midgut epithelium (PubMed:15469969). The two beta subunits mediate midgut migration by distinct mechanisms: beta-PS requires rhea/talin and Itgbn does not (PubMed:15469969). Required for rhea/talin correct cellular localization in the midgut (PubMed:15469969). Required for many embryonic (dorsal closure and somatic muscle attachments) and postembryonic developmental processes (attachment between cell layers of imaginal disks, organization of ommatidial arrays and flight muscle development) (PubMed:10821184, PubMed:7924982, PubMed:7972082, PubMed:8119134). Involved in the function and/or development of the olfactory system (PubMed:10821184). In the testes, essential for shv-dependent maintenance of somatic hub cells and their localization to the apical tip (PubMed:27191715). Plays a role in timely border cell migration during oogenesis (PubMed:19035354).</text>
</comment>
<comment type="subunit">
    <text>Heterodimer of an alpha and a beta subunit. Beta-PS associates with either alpha-PS1, alpha-PS2, alpha-PS3, alpha-PS4 or alpha-PS5.</text>
</comment>
<comment type="subcellular location">
    <subcellularLocation>
        <location evidence="11">Cell membrane</location>
        <topology evidence="8">Single-pass type I membrane protein</topology>
    </subcellularLocation>
    <subcellularLocation>
        <location evidence="8">Apical cell membrane</location>
        <topology evidence="8">Single-pass type I membrane protein</topology>
    </subcellularLocation>
    <subcellularLocation>
        <location evidence="8">Lateral cell membrane</location>
        <topology evidence="8">Single-pass type I membrane protein</topology>
    </subcellularLocation>
    <subcellularLocation>
        <location evidence="8">Basal cell membrane</location>
        <topology evidence="8">Single-pass type I membrane protein</topology>
    </subcellularLocation>
    <text evidence="8 11">In ovary, localizes to the apical, lateral and basal membranes of follicle cells through oogenesis stage 10A (PubMed:19035354). Apical membrane expression peaks at oogenesis stages 9 and 10A in columnar follicle cells overlying the oocyte but decreases in the most posterior follicle cells (PubMed:19035354). Thereafter, it is down-regulated. Localization to lateral and basal membranes persists during dorsal appendage morphogenesis (PubMed:19035354). Localizes to the cell membrane of migrating border cell clusters during stage 9-10 of oogenesis; cell surface localization is dependent on Aldo-keto reductase 1B (Ar1) and may play a role in cluster morphology (PubMed:38283991).</text>
</comment>
<comment type="tissue specificity">
    <text evidence="8 10 14">In ovaries, strongly expressed in follicle cells (PubMed:19035354). In oocytes, expressed in the forming dorsal appendages (at protein level) (PubMed:19035354). Expressed in the embryonic dorsal cuticle, the larval eye and the wing imaginal disk (PubMed:8119134). In testes, detected at the interface between somatic hub cells and cyst stem cells (PubMed:27191715).</text>
</comment>
<comment type="developmental stage">
    <text evidence="11">During stage 9-10 of oogenesis expressed in migrating border cell clusters.</text>
</comment>
<comment type="disruption phenotype">
    <text evidence="5 6">In zygotic mutant embryos, midgut forms primary constrictions but fails to elongate and the visceral muscle does not flatten but remains attached to the midgut epithelium. Embryos lacking maternal and zygotic mys show a delay in midgut migration. Mutant larvae present an olfactory phenotype, showing reduced response to isoamyl acetate but normal response to ethyl acetate.</text>
</comment>
<comment type="miscellaneous">
    <text>The absence of the beta-PS subunit results in detachment and rounding up of the muscles, thus the gene encoding beta-PS is called myospheroid.</text>
</comment>
<comment type="similarity">
    <text evidence="16">Belongs to the integrin beta chain family.</text>
</comment>